<organism>
    <name type="scientific">Arabidopsis thaliana</name>
    <name type="common">Mouse-ear cress</name>
    <dbReference type="NCBI Taxonomy" id="3702"/>
    <lineage>
        <taxon>Eukaryota</taxon>
        <taxon>Viridiplantae</taxon>
        <taxon>Streptophyta</taxon>
        <taxon>Embryophyta</taxon>
        <taxon>Tracheophyta</taxon>
        <taxon>Spermatophyta</taxon>
        <taxon>Magnoliopsida</taxon>
        <taxon>eudicotyledons</taxon>
        <taxon>Gunneridae</taxon>
        <taxon>Pentapetalae</taxon>
        <taxon>rosids</taxon>
        <taxon>malvids</taxon>
        <taxon>Brassicales</taxon>
        <taxon>Brassicaceae</taxon>
        <taxon>Camelineae</taxon>
        <taxon>Arabidopsis</taxon>
    </lineage>
</organism>
<accession>F4HTT6</accession>
<accession>Q8W4C6</accession>
<accession>Q9C9C7</accession>
<sequence>MMQPNAKLLSPSAKFLPSPIEPPQHNRRTTVGAPPSLERNCKLSRRNLSKSSLLLLLTTQTTLTPLLDFSKAQADTIANPNLTNCENRIPTKKAFIDVSIDGEPIGRIIIGLYGDDVPAGTARFSSIVSGKAGITYRRKDFVKIMPGYVQHGGIRSYGVDAERATAAVGSLQNLIEEWERGKRGEICNVNKAGSVGIVVRDPSKPPPKTKLVARNGKLVVEEEVIAVGPNGTEFVITAVDSPELEDSVLVIGKVLEGMGVVEKMREVKTVRDNTSSPYFRVAKVIGDKRAVVAERGFNRPYSKVVVTNCGLIESQTL</sequence>
<feature type="transit peptide" description="Chloroplast" evidence="2">
    <location>
        <begin position="1"/>
        <end status="unknown"/>
    </location>
</feature>
<feature type="transit peptide" description="Thylakoid">
    <location>
        <begin status="unknown"/>
        <end position="74"/>
    </location>
</feature>
<feature type="chain" id="PRO_0000429940" description="Peptidyl-prolyl cis-trans isomerase CYP26-2, chloroplastic">
    <location>
        <begin position="75"/>
        <end position="317"/>
    </location>
</feature>
<feature type="domain" description="PPIase cyclophilin-type" evidence="3">
    <location>
        <begin position="95"/>
        <end position="311"/>
    </location>
</feature>
<feature type="region of interest" description="Disordered" evidence="4">
    <location>
        <begin position="1"/>
        <end position="37"/>
    </location>
</feature>
<dbReference type="EC" id="5.2.1.8"/>
<dbReference type="EMBL" id="AC016662">
    <property type="protein sequence ID" value="AAG52521.1"/>
    <property type="status" value="ALT_SEQ"/>
    <property type="molecule type" value="Genomic_DNA"/>
</dbReference>
<dbReference type="EMBL" id="CP002684">
    <property type="protein sequence ID" value="AEE35545.1"/>
    <property type="molecule type" value="Genomic_DNA"/>
</dbReference>
<dbReference type="EMBL" id="AY062660">
    <property type="protein sequence ID" value="AAL32738.1"/>
    <property type="status" value="ALT_INIT"/>
    <property type="molecule type" value="mRNA"/>
</dbReference>
<dbReference type="EMBL" id="AY093323">
    <property type="protein sequence ID" value="AAM13322.1"/>
    <property type="molecule type" value="mRNA"/>
</dbReference>
<dbReference type="PIR" id="F96768">
    <property type="entry name" value="F96768"/>
</dbReference>
<dbReference type="RefSeq" id="NP_001321038.1">
    <property type="nucleotide sequence ID" value="NM_001334626.1"/>
</dbReference>
<dbReference type="RefSeq" id="NP_565079.1">
    <property type="nucleotide sequence ID" value="NM_106067.3"/>
</dbReference>
<dbReference type="SMR" id="F4HTT6"/>
<dbReference type="FunCoup" id="F4HTT6">
    <property type="interactions" value="1262"/>
</dbReference>
<dbReference type="STRING" id="3702.F4HTT6"/>
<dbReference type="iPTMnet" id="F4HTT6"/>
<dbReference type="PaxDb" id="3702-AT1G74070.1"/>
<dbReference type="ProteomicsDB" id="224540"/>
<dbReference type="EnsemblPlants" id="AT1G74070.1">
    <property type="protein sequence ID" value="AT1G74070.1"/>
    <property type="gene ID" value="AT1G74070"/>
</dbReference>
<dbReference type="GeneID" id="843747"/>
<dbReference type="Gramene" id="AT1G74070.1">
    <property type="protein sequence ID" value="AT1G74070.1"/>
    <property type="gene ID" value="AT1G74070"/>
</dbReference>
<dbReference type="KEGG" id="ath:AT1G74070"/>
<dbReference type="Araport" id="AT1G74070"/>
<dbReference type="TAIR" id="AT1G74070"/>
<dbReference type="eggNOG" id="KOG0865">
    <property type="taxonomic scope" value="Eukaryota"/>
</dbReference>
<dbReference type="HOGENOM" id="CLU_064825_0_0_1"/>
<dbReference type="InParanoid" id="F4HTT6"/>
<dbReference type="PRO" id="PR:F4HTT6"/>
<dbReference type="Proteomes" id="UP000006548">
    <property type="component" value="Chromosome 1"/>
</dbReference>
<dbReference type="ExpressionAtlas" id="F4HTT6">
    <property type="expression patterns" value="baseline and differential"/>
</dbReference>
<dbReference type="GO" id="GO:0009507">
    <property type="term" value="C:chloroplast"/>
    <property type="evidence" value="ECO:0007005"/>
    <property type="project" value="TAIR"/>
</dbReference>
<dbReference type="GO" id="GO:0009534">
    <property type="term" value="C:chloroplast thylakoid"/>
    <property type="evidence" value="ECO:0007669"/>
    <property type="project" value="UniProtKB-SubCell"/>
</dbReference>
<dbReference type="GO" id="GO:0005739">
    <property type="term" value="C:mitochondrion"/>
    <property type="evidence" value="ECO:0007005"/>
    <property type="project" value="TAIR"/>
</dbReference>
<dbReference type="GO" id="GO:0003755">
    <property type="term" value="F:peptidyl-prolyl cis-trans isomerase activity"/>
    <property type="evidence" value="ECO:0007669"/>
    <property type="project" value="UniProtKB-KW"/>
</dbReference>
<dbReference type="FunFam" id="2.40.100.10:FF:000040">
    <property type="entry name" value="Peptidyl-prolyl cis-trans isomerase B"/>
    <property type="match status" value="1"/>
</dbReference>
<dbReference type="Gene3D" id="2.40.100.10">
    <property type="entry name" value="Cyclophilin-like"/>
    <property type="match status" value="1"/>
</dbReference>
<dbReference type="InterPro" id="IPR029000">
    <property type="entry name" value="Cyclophilin-like_dom_sf"/>
</dbReference>
<dbReference type="InterPro" id="IPR002130">
    <property type="entry name" value="Cyclophilin-type_PPIase_dom"/>
</dbReference>
<dbReference type="InterPro" id="IPR044185">
    <property type="entry name" value="CYP26-2-like"/>
</dbReference>
<dbReference type="PANTHER" id="PTHR47724">
    <property type="entry name" value="PEPTIDYL-PROLYL CIS-TRANS ISOMERASE CYP26-2, CHLOROPLASTIC"/>
    <property type="match status" value="1"/>
</dbReference>
<dbReference type="PANTHER" id="PTHR47724:SF1">
    <property type="entry name" value="PEPTIDYL-PROLYL CIS-TRANS ISOMERASE CYP26-2, CHLOROPLASTIC"/>
    <property type="match status" value="1"/>
</dbReference>
<dbReference type="Pfam" id="PF00160">
    <property type="entry name" value="Pro_isomerase"/>
    <property type="match status" value="1"/>
</dbReference>
<dbReference type="SUPFAM" id="SSF50891">
    <property type="entry name" value="Cyclophilin-like"/>
    <property type="match status" value="1"/>
</dbReference>
<dbReference type="PROSITE" id="PS50072">
    <property type="entry name" value="CSA_PPIASE_2"/>
    <property type="match status" value="1"/>
</dbReference>
<evidence type="ECO:0000250" key="1"/>
<evidence type="ECO:0000255" key="2"/>
<evidence type="ECO:0000255" key="3">
    <source>
        <dbReference type="PROSITE-ProRule" id="PRU00156"/>
    </source>
</evidence>
<evidence type="ECO:0000256" key="4">
    <source>
        <dbReference type="SAM" id="MobiDB-lite"/>
    </source>
</evidence>
<evidence type="ECO:0000269" key="5">
    <source>
    </source>
</evidence>
<evidence type="ECO:0000269" key="6">
    <source>
    </source>
</evidence>
<evidence type="ECO:0000305" key="7"/>
<comment type="function">
    <text evidence="1">PPIases accelerate the folding of proteins. It catalyzes the cis-trans isomerization of proline imidic peptide bonds in oligopeptides (By similarity).</text>
</comment>
<comment type="catalytic activity">
    <reaction>
        <text>[protein]-peptidylproline (omega=180) = [protein]-peptidylproline (omega=0)</text>
        <dbReference type="Rhea" id="RHEA:16237"/>
        <dbReference type="Rhea" id="RHEA-COMP:10747"/>
        <dbReference type="Rhea" id="RHEA-COMP:10748"/>
        <dbReference type="ChEBI" id="CHEBI:83833"/>
        <dbReference type="ChEBI" id="CHEBI:83834"/>
        <dbReference type="EC" id="5.2.1.8"/>
    </reaction>
</comment>
<comment type="subcellular location">
    <subcellularLocation>
        <location evidence="7">Plastid</location>
        <location evidence="7">Chloroplast thylakoid</location>
    </subcellularLocation>
</comment>
<comment type="tissue specificity">
    <text evidence="5 6">Ubiquitous. Lower levels of expression in roots.</text>
</comment>
<comment type="induction">
    <text evidence="5">Down-regulated by sucrose treatment.</text>
</comment>
<comment type="similarity">
    <text evidence="7">Belongs to the cyclophilin-type PPIase family.</text>
</comment>
<comment type="sequence caution" evidence="7">
    <conflict type="erroneous gene model prediction">
        <sequence resource="EMBL-CDS" id="AAG52521"/>
    </conflict>
</comment>
<comment type="sequence caution" evidence="7">
    <conflict type="erroneous initiation">
        <sequence resource="EMBL-CDS" id="AAL32738"/>
    </conflict>
    <text>Truncated N-terminus.</text>
</comment>
<proteinExistence type="evidence at transcript level"/>
<keyword id="KW-0143">Chaperone</keyword>
<keyword id="KW-0150">Chloroplast</keyword>
<keyword id="KW-0413">Isomerase</keyword>
<keyword id="KW-0934">Plastid</keyword>
<keyword id="KW-1185">Reference proteome</keyword>
<keyword id="KW-0697">Rotamase</keyword>
<keyword id="KW-0793">Thylakoid</keyword>
<keyword id="KW-0809">Transit peptide</keyword>
<protein>
    <recommendedName>
        <fullName>Peptidyl-prolyl cis-trans isomerase CYP26-2, chloroplastic</fullName>
        <shortName>PPIase CYP26-2</shortName>
        <ecNumber>5.2.1.8</ecNumber>
    </recommendedName>
    <alternativeName>
        <fullName>Cyclophilin of 26 kDa 2</fullName>
    </alternativeName>
    <alternativeName>
        <fullName>Cyclophilin-26-2</fullName>
    </alternativeName>
</protein>
<reference key="1">
    <citation type="journal article" date="2000" name="Nature">
        <title>Sequence and analysis of chromosome 1 of the plant Arabidopsis thaliana.</title>
        <authorList>
            <person name="Theologis A."/>
            <person name="Ecker J.R."/>
            <person name="Palm C.J."/>
            <person name="Federspiel N.A."/>
            <person name="Kaul S."/>
            <person name="White O."/>
            <person name="Alonso J."/>
            <person name="Altafi H."/>
            <person name="Araujo R."/>
            <person name="Bowman C.L."/>
            <person name="Brooks S.Y."/>
            <person name="Buehler E."/>
            <person name="Chan A."/>
            <person name="Chao Q."/>
            <person name="Chen H."/>
            <person name="Cheuk R.F."/>
            <person name="Chin C.W."/>
            <person name="Chung M.K."/>
            <person name="Conn L."/>
            <person name="Conway A.B."/>
            <person name="Conway A.R."/>
            <person name="Creasy T.H."/>
            <person name="Dewar K."/>
            <person name="Dunn P."/>
            <person name="Etgu P."/>
            <person name="Feldblyum T.V."/>
            <person name="Feng J.-D."/>
            <person name="Fong B."/>
            <person name="Fujii C.Y."/>
            <person name="Gill J.E."/>
            <person name="Goldsmith A.D."/>
            <person name="Haas B."/>
            <person name="Hansen N.F."/>
            <person name="Hughes B."/>
            <person name="Huizar L."/>
            <person name="Hunter J.L."/>
            <person name="Jenkins J."/>
            <person name="Johnson-Hopson C."/>
            <person name="Khan S."/>
            <person name="Khaykin E."/>
            <person name="Kim C.J."/>
            <person name="Koo H.L."/>
            <person name="Kremenetskaia I."/>
            <person name="Kurtz D.B."/>
            <person name="Kwan A."/>
            <person name="Lam B."/>
            <person name="Langin-Hooper S."/>
            <person name="Lee A."/>
            <person name="Lee J.M."/>
            <person name="Lenz C.A."/>
            <person name="Li J.H."/>
            <person name="Li Y.-P."/>
            <person name="Lin X."/>
            <person name="Liu S.X."/>
            <person name="Liu Z.A."/>
            <person name="Luros J.S."/>
            <person name="Maiti R."/>
            <person name="Marziali A."/>
            <person name="Militscher J."/>
            <person name="Miranda M."/>
            <person name="Nguyen M."/>
            <person name="Nierman W.C."/>
            <person name="Osborne B.I."/>
            <person name="Pai G."/>
            <person name="Peterson J."/>
            <person name="Pham P.K."/>
            <person name="Rizzo M."/>
            <person name="Rooney T."/>
            <person name="Rowley D."/>
            <person name="Sakano H."/>
            <person name="Salzberg S.L."/>
            <person name="Schwartz J.R."/>
            <person name="Shinn P."/>
            <person name="Southwick A.M."/>
            <person name="Sun H."/>
            <person name="Tallon L.J."/>
            <person name="Tambunga G."/>
            <person name="Toriumi M.J."/>
            <person name="Town C.D."/>
            <person name="Utterback T."/>
            <person name="Van Aken S."/>
            <person name="Vaysberg M."/>
            <person name="Vysotskaia V.S."/>
            <person name="Walker M."/>
            <person name="Wu D."/>
            <person name="Yu G."/>
            <person name="Fraser C.M."/>
            <person name="Venter J.C."/>
            <person name="Davis R.W."/>
        </authorList>
    </citation>
    <scope>NUCLEOTIDE SEQUENCE [LARGE SCALE GENOMIC DNA]</scope>
    <source>
        <strain>cv. Columbia</strain>
    </source>
</reference>
<reference key="2">
    <citation type="journal article" date="2017" name="Plant J.">
        <title>Araport11: a complete reannotation of the Arabidopsis thaliana reference genome.</title>
        <authorList>
            <person name="Cheng C.Y."/>
            <person name="Krishnakumar V."/>
            <person name="Chan A.P."/>
            <person name="Thibaud-Nissen F."/>
            <person name="Schobel S."/>
            <person name="Town C.D."/>
        </authorList>
    </citation>
    <scope>GENOME REANNOTATION</scope>
    <source>
        <strain>cv. Columbia</strain>
    </source>
</reference>
<reference key="3">
    <citation type="journal article" date="2003" name="Science">
        <title>Empirical analysis of transcriptional activity in the Arabidopsis genome.</title>
        <authorList>
            <person name="Yamada K."/>
            <person name="Lim J."/>
            <person name="Dale J.M."/>
            <person name="Chen H."/>
            <person name="Shinn P."/>
            <person name="Palm C.J."/>
            <person name="Southwick A.M."/>
            <person name="Wu H.C."/>
            <person name="Kim C.J."/>
            <person name="Nguyen M."/>
            <person name="Pham P.K."/>
            <person name="Cheuk R.F."/>
            <person name="Karlin-Newmann G."/>
            <person name="Liu S.X."/>
            <person name="Lam B."/>
            <person name="Sakano H."/>
            <person name="Wu T."/>
            <person name="Yu G."/>
            <person name="Miranda M."/>
            <person name="Quach H.L."/>
            <person name="Tripp M."/>
            <person name="Chang C.H."/>
            <person name="Lee J.M."/>
            <person name="Toriumi M.J."/>
            <person name="Chan M.M."/>
            <person name="Tang C.C."/>
            <person name="Onodera C.S."/>
            <person name="Deng J.M."/>
            <person name="Akiyama K."/>
            <person name="Ansari Y."/>
            <person name="Arakawa T."/>
            <person name="Banh J."/>
            <person name="Banno F."/>
            <person name="Bowser L."/>
            <person name="Brooks S.Y."/>
            <person name="Carninci P."/>
            <person name="Chao Q."/>
            <person name="Choy N."/>
            <person name="Enju A."/>
            <person name="Goldsmith A.D."/>
            <person name="Gurjal M."/>
            <person name="Hansen N.F."/>
            <person name="Hayashizaki Y."/>
            <person name="Johnson-Hopson C."/>
            <person name="Hsuan V.W."/>
            <person name="Iida K."/>
            <person name="Karnes M."/>
            <person name="Khan S."/>
            <person name="Koesema E."/>
            <person name="Ishida J."/>
            <person name="Jiang P.X."/>
            <person name="Jones T."/>
            <person name="Kawai J."/>
            <person name="Kamiya A."/>
            <person name="Meyers C."/>
            <person name="Nakajima M."/>
            <person name="Narusaka M."/>
            <person name="Seki M."/>
            <person name="Sakurai T."/>
            <person name="Satou M."/>
            <person name="Tamse R."/>
            <person name="Vaysberg M."/>
            <person name="Wallender E.K."/>
            <person name="Wong C."/>
            <person name="Yamamura Y."/>
            <person name="Yuan S."/>
            <person name="Shinozaki K."/>
            <person name="Davis R.W."/>
            <person name="Theologis A."/>
            <person name="Ecker J.R."/>
        </authorList>
    </citation>
    <scope>NUCLEOTIDE SEQUENCE [LARGE SCALE MRNA] OF 10-317</scope>
    <source>
        <strain>cv. Columbia</strain>
    </source>
</reference>
<reference key="4">
    <citation type="journal article" date="2004" name="Plant Physiol.">
        <title>Immunophilins and parvulins. Superfamily of peptidyl prolyl isomerases in Arabidopsis.</title>
        <authorList>
            <person name="He Z."/>
            <person name="Li L."/>
            <person name="Luan S."/>
        </authorList>
    </citation>
    <scope>TISSUE SPECIFICITY</scope>
    <scope>GENE FAMILY</scope>
    <scope>NOMENCLATURE</scope>
    <scope>INDUCTION</scope>
</reference>
<reference key="5">
    <citation type="journal article" date="2004" name="Plant Physiol.">
        <title>The Arabidopsis cyclophilin gene family.</title>
        <authorList>
            <person name="Romano P.G.N."/>
            <person name="Horton P."/>
            <person name="Gray J.E."/>
        </authorList>
    </citation>
    <scope>TISSUE SPECIFICITY</scope>
    <scope>GENE FAMILY</scope>
    <scope>NOMENCLATURE</scope>
</reference>
<name>CP26B_ARATH</name>
<gene>
    <name type="primary">CYP26-2</name>
    <name type="ordered locus">At1g74070</name>
    <name type="ORF">F2P9.6</name>
</gene>